<dbReference type="EMBL" id="CP000673">
    <property type="protein sequence ID" value="EDK32285.1"/>
    <property type="molecule type" value="Genomic_DNA"/>
</dbReference>
<dbReference type="RefSeq" id="WP_011988810.1">
    <property type="nucleotide sequence ID" value="NC_009706.1"/>
</dbReference>
<dbReference type="SMR" id="A5N4Q4"/>
<dbReference type="STRING" id="431943.CKL_0231"/>
<dbReference type="KEGG" id="ckl:CKL_0231"/>
<dbReference type="eggNOG" id="COG0197">
    <property type="taxonomic scope" value="Bacteria"/>
</dbReference>
<dbReference type="HOGENOM" id="CLU_078858_2_1_9"/>
<dbReference type="Proteomes" id="UP000002411">
    <property type="component" value="Chromosome"/>
</dbReference>
<dbReference type="GO" id="GO:0022625">
    <property type="term" value="C:cytosolic large ribosomal subunit"/>
    <property type="evidence" value="ECO:0007669"/>
    <property type="project" value="TreeGrafter"/>
</dbReference>
<dbReference type="GO" id="GO:0019843">
    <property type="term" value="F:rRNA binding"/>
    <property type="evidence" value="ECO:0007669"/>
    <property type="project" value="UniProtKB-UniRule"/>
</dbReference>
<dbReference type="GO" id="GO:0003735">
    <property type="term" value="F:structural constituent of ribosome"/>
    <property type="evidence" value="ECO:0007669"/>
    <property type="project" value="InterPro"/>
</dbReference>
<dbReference type="GO" id="GO:0000049">
    <property type="term" value="F:tRNA binding"/>
    <property type="evidence" value="ECO:0007669"/>
    <property type="project" value="UniProtKB-KW"/>
</dbReference>
<dbReference type="GO" id="GO:0006412">
    <property type="term" value="P:translation"/>
    <property type="evidence" value="ECO:0007669"/>
    <property type="project" value="UniProtKB-UniRule"/>
</dbReference>
<dbReference type="CDD" id="cd01433">
    <property type="entry name" value="Ribosomal_L16_L10e"/>
    <property type="match status" value="1"/>
</dbReference>
<dbReference type="FunFam" id="3.90.1170.10:FF:000001">
    <property type="entry name" value="50S ribosomal protein L16"/>
    <property type="match status" value="1"/>
</dbReference>
<dbReference type="Gene3D" id="3.90.1170.10">
    <property type="entry name" value="Ribosomal protein L10e/L16"/>
    <property type="match status" value="1"/>
</dbReference>
<dbReference type="HAMAP" id="MF_01342">
    <property type="entry name" value="Ribosomal_uL16"/>
    <property type="match status" value="1"/>
</dbReference>
<dbReference type="InterPro" id="IPR047873">
    <property type="entry name" value="Ribosomal_uL16"/>
</dbReference>
<dbReference type="InterPro" id="IPR000114">
    <property type="entry name" value="Ribosomal_uL16_bact-type"/>
</dbReference>
<dbReference type="InterPro" id="IPR020798">
    <property type="entry name" value="Ribosomal_uL16_CS"/>
</dbReference>
<dbReference type="InterPro" id="IPR016180">
    <property type="entry name" value="Ribosomal_uL16_dom"/>
</dbReference>
<dbReference type="InterPro" id="IPR036920">
    <property type="entry name" value="Ribosomal_uL16_sf"/>
</dbReference>
<dbReference type="NCBIfam" id="TIGR01164">
    <property type="entry name" value="rplP_bact"/>
    <property type="match status" value="1"/>
</dbReference>
<dbReference type="PANTHER" id="PTHR12220">
    <property type="entry name" value="50S/60S RIBOSOMAL PROTEIN L16"/>
    <property type="match status" value="1"/>
</dbReference>
<dbReference type="PANTHER" id="PTHR12220:SF13">
    <property type="entry name" value="LARGE RIBOSOMAL SUBUNIT PROTEIN UL16M"/>
    <property type="match status" value="1"/>
</dbReference>
<dbReference type="Pfam" id="PF00252">
    <property type="entry name" value="Ribosomal_L16"/>
    <property type="match status" value="1"/>
</dbReference>
<dbReference type="PRINTS" id="PR00060">
    <property type="entry name" value="RIBOSOMALL16"/>
</dbReference>
<dbReference type="SUPFAM" id="SSF54686">
    <property type="entry name" value="Ribosomal protein L16p/L10e"/>
    <property type="match status" value="1"/>
</dbReference>
<dbReference type="PROSITE" id="PS00586">
    <property type="entry name" value="RIBOSOMAL_L16_1"/>
    <property type="match status" value="1"/>
</dbReference>
<dbReference type="PROSITE" id="PS00701">
    <property type="entry name" value="RIBOSOMAL_L16_2"/>
    <property type="match status" value="1"/>
</dbReference>
<keyword id="KW-1185">Reference proteome</keyword>
<keyword id="KW-0687">Ribonucleoprotein</keyword>
<keyword id="KW-0689">Ribosomal protein</keyword>
<keyword id="KW-0694">RNA-binding</keyword>
<keyword id="KW-0699">rRNA-binding</keyword>
<keyword id="KW-0820">tRNA-binding</keyword>
<comment type="function">
    <text evidence="1">Binds 23S rRNA and is also seen to make contacts with the A and possibly P site tRNAs.</text>
</comment>
<comment type="subunit">
    <text evidence="1">Part of the 50S ribosomal subunit.</text>
</comment>
<comment type="similarity">
    <text evidence="1">Belongs to the universal ribosomal protein uL16 family.</text>
</comment>
<proteinExistence type="inferred from homology"/>
<name>RL16_CLOK5</name>
<accession>A5N4Q4</accession>
<evidence type="ECO:0000255" key="1">
    <source>
        <dbReference type="HAMAP-Rule" id="MF_01342"/>
    </source>
</evidence>
<evidence type="ECO:0000256" key="2">
    <source>
        <dbReference type="SAM" id="MobiDB-lite"/>
    </source>
</evidence>
<evidence type="ECO:0000305" key="3"/>
<gene>
    <name evidence="1" type="primary">rplP</name>
    <name type="ordered locus">CKL_0231</name>
</gene>
<reference key="1">
    <citation type="journal article" date="2008" name="Proc. Natl. Acad. Sci. U.S.A.">
        <title>The genome of Clostridium kluyveri, a strict anaerobe with unique metabolic features.</title>
        <authorList>
            <person name="Seedorf H."/>
            <person name="Fricke W.F."/>
            <person name="Veith B."/>
            <person name="Brueggemann H."/>
            <person name="Liesegang H."/>
            <person name="Strittmatter A."/>
            <person name="Miethke M."/>
            <person name="Buckel W."/>
            <person name="Hinderberger J."/>
            <person name="Li F."/>
            <person name="Hagemeier C."/>
            <person name="Thauer R.K."/>
            <person name="Gottschalk G."/>
        </authorList>
    </citation>
    <scope>NUCLEOTIDE SEQUENCE [LARGE SCALE GENOMIC DNA]</scope>
    <source>
        <strain>ATCC 8527 / DSM 555 / NBRC 12016 / NCIMB 10680 / K1</strain>
    </source>
</reference>
<organism>
    <name type="scientific">Clostridium kluyveri (strain ATCC 8527 / DSM 555 / NBRC 12016 / NCIMB 10680 / K1)</name>
    <dbReference type="NCBI Taxonomy" id="431943"/>
    <lineage>
        <taxon>Bacteria</taxon>
        <taxon>Bacillati</taxon>
        <taxon>Bacillota</taxon>
        <taxon>Clostridia</taxon>
        <taxon>Eubacteriales</taxon>
        <taxon>Clostridiaceae</taxon>
        <taxon>Clostridium</taxon>
    </lineage>
</organism>
<feature type="chain" id="PRO_1000086749" description="Large ribosomal subunit protein uL16">
    <location>
        <begin position="1"/>
        <end position="147"/>
    </location>
</feature>
<feature type="region of interest" description="Disordered" evidence="2">
    <location>
        <begin position="1"/>
        <end position="20"/>
    </location>
</feature>
<sequence>MLMPKKVKHRKVQRGRMKGKATRGNSIAYGDYAIQATECAWITNNQIESARIAINRYIRRGGKLWIKIFPDKPVTEKPAETRMGSGKGSPEYWVAVVKPGRILFELSGVPEETAREAMRLASHKLPIKTKFVTKRDFEEVGGESDEG</sequence>
<protein>
    <recommendedName>
        <fullName evidence="1">Large ribosomal subunit protein uL16</fullName>
    </recommendedName>
    <alternativeName>
        <fullName evidence="3">50S ribosomal protein L16</fullName>
    </alternativeName>
</protein>